<evidence type="ECO:0000255" key="1">
    <source>
        <dbReference type="HAMAP-Rule" id="MF_01581"/>
    </source>
</evidence>
<name>YNFB_SALDC</name>
<dbReference type="EMBL" id="CP001144">
    <property type="protein sequence ID" value="ACH77410.1"/>
    <property type="molecule type" value="Genomic_DNA"/>
</dbReference>
<dbReference type="RefSeq" id="WP_001066440.1">
    <property type="nucleotide sequence ID" value="NC_011205.1"/>
</dbReference>
<dbReference type="KEGG" id="sed:SeD_A1836"/>
<dbReference type="HOGENOM" id="CLU_167574_0_0_6"/>
<dbReference type="Proteomes" id="UP000008322">
    <property type="component" value="Chromosome"/>
</dbReference>
<dbReference type="HAMAP" id="MF_01581">
    <property type="entry name" value="UPF0482"/>
    <property type="match status" value="1"/>
</dbReference>
<dbReference type="InterPro" id="IPR009700">
    <property type="entry name" value="DUF1283"/>
</dbReference>
<dbReference type="NCBIfam" id="NF010180">
    <property type="entry name" value="PRK13659.1"/>
    <property type="match status" value="1"/>
</dbReference>
<dbReference type="Pfam" id="PF06932">
    <property type="entry name" value="DUF1283"/>
    <property type="match status" value="1"/>
</dbReference>
<gene>
    <name evidence="1" type="primary">ynfB</name>
    <name type="ordered locus">SeD_A1836</name>
</gene>
<proteinExistence type="inferred from homology"/>
<feature type="signal peptide" evidence="1">
    <location>
        <begin position="1"/>
        <end position="28"/>
    </location>
</feature>
<feature type="chain" id="PRO_1000201006" description="UPF0482 protein YnfB">
    <location>
        <begin position="29"/>
        <end position="113"/>
    </location>
</feature>
<organism>
    <name type="scientific">Salmonella dublin (strain CT_02021853)</name>
    <dbReference type="NCBI Taxonomy" id="439851"/>
    <lineage>
        <taxon>Bacteria</taxon>
        <taxon>Pseudomonadati</taxon>
        <taxon>Pseudomonadota</taxon>
        <taxon>Gammaproteobacteria</taxon>
        <taxon>Enterobacterales</taxon>
        <taxon>Enterobacteriaceae</taxon>
        <taxon>Salmonella</taxon>
    </lineage>
</organism>
<sequence>MNNTLSKRLCLTAMLTLAAVVYTTSAFAETSKLVIESGDSAQSRQEAAMEKEQWNDTRSLRQKVNTRAEKEWDKADAAFDNRDKCEQSANINAYWEPNTLRCLDRRTGRVITP</sequence>
<keyword id="KW-0732">Signal</keyword>
<accession>B5FHQ0</accession>
<protein>
    <recommendedName>
        <fullName evidence="1">UPF0482 protein YnfB</fullName>
    </recommendedName>
</protein>
<comment type="similarity">
    <text evidence="1">Belongs to the UPF0482 family.</text>
</comment>
<reference key="1">
    <citation type="journal article" date="2011" name="J. Bacteriol.">
        <title>Comparative genomics of 28 Salmonella enterica isolates: evidence for CRISPR-mediated adaptive sublineage evolution.</title>
        <authorList>
            <person name="Fricke W.F."/>
            <person name="Mammel M.K."/>
            <person name="McDermott P.F."/>
            <person name="Tartera C."/>
            <person name="White D.G."/>
            <person name="Leclerc J.E."/>
            <person name="Ravel J."/>
            <person name="Cebula T.A."/>
        </authorList>
    </citation>
    <scope>NUCLEOTIDE SEQUENCE [LARGE SCALE GENOMIC DNA]</scope>
    <source>
        <strain>CT_02021853</strain>
    </source>
</reference>